<feature type="chain" id="PRO_0000444844" description="Putative epoxide hydrolase AFT8">
    <location>
        <begin position="1"/>
        <end position="402"/>
    </location>
</feature>
<sequence length="402" mass="44371">MASYKNIPSTAKGSPISFDFSFPQPKLDHLRQVLELHPLGREAPSKTLRGSSKPQWFGNAKEIMRRFDWAAEEELLKAFPHYVVGVEDTIGGQMLQVHFVALFSTSPDAIPVLLIHSWFSSYVEYLCLLSVFTERFPQACDLPFHVIVPSLPGYDFSSPLSRETNNAQINEDNARVLNQLMVNLGFGAGSGGIGGYVVHGGVSSLRMCYTLAKEYKDCRALHANLDGAYRHTLTSSGGDEFEAVKSVLAELHPPEDWDSHERDMIRLAISTSPVSLLALIGSQFFGEQEQGAALRMVALIVAHHWMTDTYPDASQESYCIKDMSAEDLSHVLKHTGLEPNKPVGISFFSHGQGSASDIRPIVDGSSWSSRHEGNPFVAVLDQPNQTVGDLLGFVRQVQKQHS</sequence>
<dbReference type="EC" id="3.-.-.-" evidence="1"/>
<dbReference type="EMBL" id="AB873047">
    <property type="protein sequence ID" value="BAO05507.1"/>
    <property type="molecule type" value="Genomic_DNA"/>
</dbReference>
<dbReference type="SMR" id="V5XKK6"/>
<dbReference type="ESTHER" id="altal-aft8">
    <property type="family name" value="Epoxide_hydrolase"/>
</dbReference>
<dbReference type="VEuPathDB" id="FungiDB:CC77DRAFT_801013"/>
<dbReference type="GO" id="GO:0004301">
    <property type="term" value="F:epoxide hydrolase activity"/>
    <property type="evidence" value="ECO:0007669"/>
    <property type="project" value="TreeGrafter"/>
</dbReference>
<dbReference type="GO" id="GO:0097176">
    <property type="term" value="P:epoxide metabolic process"/>
    <property type="evidence" value="ECO:0007669"/>
    <property type="project" value="TreeGrafter"/>
</dbReference>
<dbReference type="Gene3D" id="3.40.50.1820">
    <property type="entry name" value="alpha/beta hydrolase"/>
    <property type="match status" value="1"/>
</dbReference>
<dbReference type="InterPro" id="IPR029058">
    <property type="entry name" value="AB_hydrolase_fold"/>
</dbReference>
<dbReference type="InterPro" id="IPR010497">
    <property type="entry name" value="Epoxide_hydro_N"/>
</dbReference>
<dbReference type="PANTHER" id="PTHR21661">
    <property type="entry name" value="EPOXIDE HYDROLASE 1-RELATED"/>
    <property type="match status" value="1"/>
</dbReference>
<dbReference type="PANTHER" id="PTHR21661:SF39">
    <property type="entry name" value="HYDROLASE, PUTATIVE (AFU_ORTHOLOGUE AFUA_3G08960)-RELATED"/>
    <property type="match status" value="1"/>
</dbReference>
<dbReference type="Pfam" id="PF06441">
    <property type="entry name" value="EHN"/>
    <property type="match status" value="1"/>
</dbReference>
<dbReference type="SUPFAM" id="SSF53474">
    <property type="entry name" value="alpha/beta-Hydrolases"/>
    <property type="match status" value="1"/>
</dbReference>
<proteinExistence type="inferred from homology"/>
<accession>V5XKK6</accession>
<name>AFT8_ALTAL</name>
<gene>
    <name evidence="7" type="primary">AFT8</name>
</gene>
<protein>
    <recommendedName>
        <fullName evidence="1">Putative epoxide hydrolase AFT8</fullName>
        <ecNumber evidence="1">3.-.-.-</ecNumber>
    </recommendedName>
    <alternativeName>
        <fullName evidence="7">AF-toxin biosynthesis protein 8</fullName>
    </alternativeName>
</protein>
<comment type="function">
    <text evidence="2 3 4 5 6 9">Putative epoxide hydrolase; part of the gene clusters that mediate the biosynthesis of the host-selective toxins (HSTs) AF-toxins responsible for Alternaria black spot of strawberry disease by the strawberry pathotype (Probable). AF-toxin I and III are valine derivatives of 2,3-dyhydroxy-isovaleric acid and 2-hydroxy-isovaleric acid respectively, while AF II is an isoleucine derivative of 2-hydroxy-valeric acid (PubMed:15066029, PubMed:22846083, Ref.4). These derivatives are bound to a 9,10-epoxy-8-hydroxy-9-methyl-decatrienoic acid (EDA) moiety (PubMed:15066029, PubMed:22846083, Ref.4). On cellular level, AF-toxins affect plasma membrane of susceptible cells and cause a sudden increase in loss of K(+) after a few minutes of toxin treatment (PubMed:22846083). The aldo-keto reductase AFTS1 catalyzes the conversion of 2-keto-isovaleric acid (2-KIV) to 2-hydroxy-isovaleric acid (2-HIV) by reduction of its ketone to an alcohol (PubMed:15066029). The acyl-CoA ligase AFT1, the hydrolase AFT2 and the enoyl-CoA hydratases AFT3 and AFT6, but also the polyketide synthase AFT9, the acyl-CoA dehydrogenase AFT10, the cytochrome P450 monooxygenase AFT11 and the oxidoreductase AFT12 are all involved in the biosynthesis of the AK-, AF- and ACT-toxin common EDA structural moiety (PubMed:12019223, PubMed:18986255, Ref.4). The exact function of each enzyme, and of additional enzymes identified within the AF-toxin clusters have still to be determined (PubMed:12019223, PubMed:18986255, Ref.4).</text>
</comment>
<comment type="pathway">
    <text evidence="8">Mycotoxin biosynthesis.</text>
</comment>
<comment type="miscellaneous">
    <text evidence="2">Gene clusters encoding host-selective toxins (HSTs) are localized on conditionally dispensable chromosomes (CDCs), also called supernumerary chromosomes, where they are present in multiple copies (PubMed:12019223). The CDCs are not essential for saprophytic growth but controls host-selective pathogenicity (PubMed:12019223).</text>
</comment>
<comment type="similarity">
    <text evidence="8">Belongs to the peptidase S33 family.</text>
</comment>
<keyword id="KW-0378">Hydrolase</keyword>
<keyword id="KW-0843">Virulence</keyword>
<organism>
    <name type="scientific">Alternaria alternata</name>
    <name type="common">Alternaria rot fungus</name>
    <name type="synonym">Torula alternata</name>
    <dbReference type="NCBI Taxonomy" id="5599"/>
    <lineage>
        <taxon>Eukaryota</taxon>
        <taxon>Fungi</taxon>
        <taxon>Dikarya</taxon>
        <taxon>Ascomycota</taxon>
        <taxon>Pezizomycotina</taxon>
        <taxon>Dothideomycetes</taxon>
        <taxon>Pleosporomycetidae</taxon>
        <taxon>Pleosporales</taxon>
        <taxon>Pleosporineae</taxon>
        <taxon>Pleosporaceae</taxon>
        <taxon>Alternaria</taxon>
        <taxon>Alternaria sect. Alternaria</taxon>
        <taxon>Alternaria alternata complex</taxon>
    </lineage>
</organism>
<reference key="1">
    <citation type="submission" date="2013-11" db="EMBL/GenBank/DDBJ databases">
        <title>The gene cluster involved in AF-toxin biosynthesis of Alternaria alternata.</title>
        <authorList>
            <person name="Kondou H."/>
            <person name="Hara A."/>
            <person name="Mase C."/>
            <person name="Harimoto Y."/>
            <person name="Tsuge T."/>
        </authorList>
    </citation>
    <scope>NUCLEOTIDE SEQUENCE [GENOMIC DNA]</scope>
    <source>
        <strain>NAF8</strain>
    </source>
</reference>
<reference key="2">
    <citation type="journal article" date="2002" name="Genetics">
        <title>A conditionally dispensable chromosome controls host-specific pathogenicity in the fungal plant pathogen Alternaria alternata.</title>
        <authorList>
            <person name="Hatta R."/>
            <person name="Ito K."/>
            <person name="Hosaki Y."/>
            <person name="Tanaka T."/>
            <person name="Tanaka A."/>
            <person name="Yamamoto M."/>
            <person name="Akimitsu K."/>
            <person name="Tsuge T."/>
        </authorList>
    </citation>
    <scope>FUNCTION</scope>
    <source>
        <strain>NAF8</strain>
    </source>
</reference>
<reference key="3">
    <citation type="journal article" date="2004" name="Mol. Microbiol.">
        <title>Dissection of the host range of the fungal plant pathogen Alternaria alternata by modification of secondary metabolism.</title>
        <authorList>
            <person name="Ito K."/>
            <person name="Tanaka T."/>
            <person name="Hatta R."/>
            <person name="Yamamoto M."/>
            <person name="Akimitsu K."/>
            <person name="Tsuge T."/>
        </authorList>
    </citation>
    <scope>FUNCTION</scope>
    <source>
        <strain>NAF8</strain>
    </source>
</reference>
<reference key="4">
    <citation type="journal article" date="2005" name="J. Gen. Plant Pathol.">
        <title>Structural analysis of cosmid clone pcAFT-2 carrying AFT10-1 encoding an acyl-CoA dehydrogenase involved in AF-toxin production in the strawberry pathotype of Alternaria alternata.</title>
        <authorList>
            <person name="Ruswandi S."/>
            <person name="Kitani K."/>
            <person name="Akimitsu K."/>
            <person name="Tsuge T."/>
            <person name="Shiraishi T."/>
            <person name="Yamamoto M."/>
        </authorList>
    </citation>
    <scope>FUNCTION</scope>
    <source>
        <strain>NAF8</strain>
    </source>
</reference>
<reference key="5">
    <citation type="journal article" date="2008" name="Mol. Plant Microbe Interact.">
        <title>Functional analysis of a multicopy host-selective ACT-toxin biosynthesis gene in the tangerine pathotype of Alternaria alternata using RNA silencing.</title>
        <authorList>
            <person name="Miyamoto Y."/>
            <person name="Masunaka A."/>
            <person name="Tsuge T."/>
            <person name="Yamamoto M."/>
            <person name="Ohtani K."/>
            <person name="Fukumoto T."/>
            <person name="Gomi K."/>
            <person name="Peever T.L."/>
            <person name="Akimitsu K."/>
        </authorList>
    </citation>
    <scope>FUNCTION</scope>
    <source>
        <strain>NAF8</strain>
    </source>
</reference>
<reference key="6">
    <citation type="journal article" date="2013" name="FEMS Microbiol. Rev.">
        <title>Host-selective toxins produced by the plant pathogenic fungus Alternaria alternata.</title>
        <authorList>
            <person name="Tsuge T."/>
            <person name="Harimoto Y."/>
            <person name="Akimitsu K."/>
            <person name="Ohtani K."/>
            <person name="Kodama M."/>
            <person name="Akagi Y."/>
            <person name="Egusa M."/>
            <person name="Yamamoto M."/>
            <person name="Otani H."/>
        </authorList>
    </citation>
    <scope>REVIEW ON HOST-SELECTIVE TOXINS</scope>
</reference>
<evidence type="ECO:0000250" key="1">
    <source>
        <dbReference type="UniProtKB" id="M2WIS5"/>
    </source>
</evidence>
<evidence type="ECO:0000269" key="2">
    <source>
    </source>
</evidence>
<evidence type="ECO:0000269" key="3">
    <source>
    </source>
</evidence>
<evidence type="ECO:0000269" key="4">
    <source>
    </source>
</evidence>
<evidence type="ECO:0000269" key="5">
    <source ref="4"/>
</evidence>
<evidence type="ECO:0000303" key="6">
    <source>
    </source>
</evidence>
<evidence type="ECO:0000303" key="7">
    <source ref="1"/>
</evidence>
<evidence type="ECO:0000305" key="8"/>
<evidence type="ECO:0000305" key="9">
    <source ref="1"/>
</evidence>